<keyword id="KW-0002">3D-structure</keyword>
<keyword id="KW-1185">Reference proteome</keyword>
<keyword id="KW-0687">Ribonucleoprotein</keyword>
<keyword id="KW-0689">Ribosomal protein</keyword>
<keyword id="KW-0694">RNA-binding</keyword>
<keyword id="KW-0699">rRNA-binding</keyword>
<evidence type="ECO:0000255" key="1">
    <source>
        <dbReference type="HAMAP-Rule" id="MF_01320"/>
    </source>
</evidence>
<evidence type="ECO:0000256" key="2">
    <source>
        <dbReference type="SAM" id="MobiDB-lite"/>
    </source>
</evidence>
<evidence type="ECO:0000305" key="3"/>
<evidence type="ECO:0007829" key="4">
    <source>
        <dbReference type="PDB" id="7F0D"/>
    </source>
</evidence>
<proteinExistence type="evidence at protein level"/>
<feature type="chain" id="PRO_0000309962" description="Large ribosomal subunit protein uL2">
    <location>
        <begin position="1"/>
        <end position="280"/>
    </location>
</feature>
<feature type="region of interest" description="Disordered" evidence="2">
    <location>
        <begin position="27"/>
        <end position="59"/>
    </location>
</feature>
<feature type="region of interest" description="Disordered" evidence="2">
    <location>
        <begin position="225"/>
        <end position="280"/>
    </location>
</feature>
<feature type="compositionally biased region" description="Basic residues" evidence="2">
    <location>
        <begin position="37"/>
        <end position="59"/>
    </location>
</feature>
<feature type="compositionally biased region" description="Basic residues" evidence="2">
    <location>
        <begin position="268"/>
        <end position="280"/>
    </location>
</feature>
<feature type="strand" evidence="4">
    <location>
        <begin position="13"/>
        <end position="15"/>
    </location>
</feature>
<feature type="helix" evidence="4">
    <location>
        <begin position="31"/>
        <end position="33"/>
    </location>
</feature>
<feature type="strand" evidence="4">
    <location>
        <begin position="34"/>
        <end position="37"/>
    </location>
</feature>
<feature type="strand" evidence="4">
    <location>
        <begin position="47"/>
        <end position="51"/>
    </location>
</feature>
<feature type="strand" evidence="4">
    <location>
        <begin position="60"/>
        <end position="63"/>
    </location>
</feature>
<feature type="strand" evidence="4">
    <location>
        <begin position="92"/>
        <end position="96"/>
    </location>
</feature>
<feature type="strand" evidence="4">
    <location>
        <begin position="102"/>
        <end position="106"/>
    </location>
</feature>
<feature type="strand" evidence="4">
    <location>
        <begin position="113"/>
        <end position="115"/>
    </location>
</feature>
<feature type="helix" evidence="4">
    <location>
        <begin position="133"/>
        <end position="135"/>
    </location>
</feature>
<feature type="strand" evidence="4">
    <location>
        <begin position="142"/>
        <end position="144"/>
    </location>
</feature>
<feature type="strand" evidence="4">
    <location>
        <begin position="146"/>
        <end position="148"/>
    </location>
</feature>
<feature type="turn" evidence="4">
    <location>
        <begin position="149"/>
        <end position="151"/>
    </location>
</feature>
<feature type="strand" evidence="4">
    <location>
        <begin position="163"/>
        <end position="168"/>
    </location>
</feature>
<feature type="strand" evidence="4">
    <location>
        <begin position="173"/>
        <end position="176"/>
    </location>
</feature>
<feature type="strand" evidence="4">
    <location>
        <begin position="182"/>
        <end position="185"/>
    </location>
</feature>
<feature type="strand" evidence="4">
    <location>
        <begin position="189"/>
        <end position="192"/>
    </location>
</feature>
<feature type="turn" evidence="4">
    <location>
        <begin position="201"/>
        <end position="203"/>
    </location>
</feature>
<feature type="helix" evidence="4">
    <location>
        <begin position="209"/>
        <end position="215"/>
    </location>
</feature>
<feature type="strand" evidence="4">
    <location>
        <begin position="223"/>
        <end position="226"/>
    </location>
</feature>
<feature type="turn" evidence="4">
    <location>
        <begin position="228"/>
        <end position="230"/>
    </location>
</feature>
<feature type="strand" evidence="4">
    <location>
        <begin position="243"/>
        <end position="245"/>
    </location>
</feature>
<feature type="strand" evidence="4">
    <location>
        <begin position="249"/>
        <end position="251"/>
    </location>
</feature>
<feature type="strand" evidence="4">
    <location>
        <begin position="253"/>
        <end position="255"/>
    </location>
</feature>
<feature type="turn" evidence="4">
    <location>
        <begin position="263"/>
        <end position="267"/>
    </location>
</feature>
<protein>
    <recommendedName>
        <fullName evidence="1">Large ribosomal subunit protein uL2</fullName>
    </recommendedName>
    <alternativeName>
        <fullName evidence="3">50S ribosomal protein L2</fullName>
    </alternativeName>
</protein>
<gene>
    <name evidence="1" type="primary">rplB</name>
    <name type="ordered locus">MRA_0712</name>
</gene>
<dbReference type="EMBL" id="CP000611">
    <property type="protein sequence ID" value="ABQ72440.1"/>
    <property type="molecule type" value="Genomic_DNA"/>
</dbReference>
<dbReference type="RefSeq" id="WP_003403582.1">
    <property type="nucleotide sequence ID" value="NZ_CP016972.1"/>
</dbReference>
<dbReference type="PDB" id="7F0D">
    <property type="method" value="EM"/>
    <property type="resolution" value="3.30 A"/>
    <property type="chains" value="C=1-280"/>
</dbReference>
<dbReference type="PDBsum" id="7F0D"/>
<dbReference type="SMR" id="A5U090"/>
<dbReference type="GeneID" id="45424669"/>
<dbReference type="KEGG" id="mra:MRA_0712"/>
<dbReference type="eggNOG" id="COG0090">
    <property type="taxonomic scope" value="Bacteria"/>
</dbReference>
<dbReference type="HOGENOM" id="CLU_036235_2_1_11"/>
<dbReference type="Proteomes" id="UP000001988">
    <property type="component" value="Chromosome"/>
</dbReference>
<dbReference type="GO" id="GO:0015934">
    <property type="term" value="C:large ribosomal subunit"/>
    <property type="evidence" value="ECO:0007669"/>
    <property type="project" value="InterPro"/>
</dbReference>
<dbReference type="GO" id="GO:0019843">
    <property type="term" value="F:rRNA binding"/>
    <property type="evidence" value="ECO:0007669"/>
    <property type="project" value="UniProtKB-UniRule"/>
</dbReference>
<dbReference type="GO" id="GO:0003735">
    <property type="term" value="F:structural constituent of ribosome"/>
    <property type="evidence" value="ECO:0007669"/>
    <property type="project" value="InterPro"/>
</dbReference>
<dbReference type="GO" id="GO:0016740">
    <property type="term" value="F:transferase activity"/>
    <property type="evidence" value="ECO:0007669"/>
    <property type="project" value="InterPro"/>
</dbReference>
<dbReference type="GO" id="GO:0002181">
    <property type="term" value="P:cytoplasmic translation"/>
    <property type="evidence" value="ECO:0007669"/>
    <property type="project" value="TreeGrafter"/>
</dbReference>
<dbReference type="FunFam" id="2.30.30.30:FF:000001">
    <property type="entry name" value="50S ribosomal protein L2"/>
    <property type="match status" value="1"/>
</dbReference>
<dbReference type="FunFam" id="2.40.50.140:FF:000003">
    <property type="entry name" value="50S ribosomal protein L2"/>
    <property type="match status" value="1"/>
</dbReference>
<dbReference type="FunFam" id="4.10.950.10:FF:000001">
    <property type="entry name" value="50S ribosomal protein L2"/>
    <property type="match status" value="1"/>
</dbReference>
<dbReference type="Gene3D" id="2.30.30.30">
    <property type="match status" value="1"/>
</dbReference>
<dbReference type="Gene3D" id="2.40.50.140">
    <property type="entry name" value="Nucleic acid-binding proteins"/>
    <property type="match status" value="1"/>
</dbReference>
<dbReference type="Gene3D" id="4.10.950.10">
    <property type="entry name" value="Ribosomal protein L2, domain 3"/>
    <property type="match status" value="1"/>
</dbReference>
<dbReference type="HAMAP" id="MF_01320_B">
    <property type="entry name" value="Ribosomal_uL2_B"/>
    <property type="match status" value="1"/>
</dbReference>
<dbReference type="InterPro" id="IPR012340">
    <property type="entry name" value="NA-bd_OB-fold"/>
</dbReference>
<dbReference type="InterPro" id="IPR014722">
    <property type="entry name" value="Rib_uL2_dom2"/>
</dbReference>
<dbReference type="InterPro" id="IPR002171">
    <property type="entry name" value="Ribosomal_uL2"/>
</dbReference>
<dbReference type="InterPro" id="IPR005880">
    <property type="entry name" value="Ribosomal_uL2_bac/org-type"/>
</dbReference>
<dbReference type="InterPro" id="IPR022669">
    <property type="entry name" value="Ribosomal_uL2_C"/>
</dbReference>
<dbReference type="InterPro" id="IPR022671">
    <property type="entry name" value="Ribosomal_uL2_CS"/>
</dbReference>
<dbReference type="InterPro" id="IPR014726">
    <property type="entry name" value="Ribosomal_uL2_dom3"/>
</dbReference>
<dbReference type="InterPro" id="IPR022666">
    <property type="entry name" value="Ribosomal_uL2_RNA-bd_dom"/>
</dbReference>
<dbReference type="InterPro" id="IPR008991">
    <property type="entry name" value="Translation_prot_SH3-like_sf"/>
</dbReference>
<dbReference type="NCBIfam" id="TIGR01171">
    <property type="entry name" value="rplB_bact"/>
    <property type="match status" value="1"/>
</dbReference>
<dbReference type="PANTHER" id="PTHR13691:SF5">
    <property type="entry name" value="LARGE RIBOSOMAL SUBUNIT PROTEIN UL2M"/>
    <property type="match status" value="1"/>
</dbReference>
<dbReference type="PANTHER" id="PTHR13691">
    <property type="entry name" value="RIBOSOMAL PROTEIN L2"/>
    <property type="match status" value="1"/>
</dbReference>
<dbReference type="Pfam" id="PF00181">
    <property type="entry name" value="Ribosomal_L2"/>
    <property type="match status" value="1"/>
</dbReference>
<dbReference type="Pfam" id="PF03947">
    <property type="entry name" value="Ribosomal_L2_C"/>
    <property type="match status" value="1"/>
</dbReference>
<dbReference type="PIRSF" id="PIRSF002158">
    <property type="entry name" value="Ribosomal_L2"/>
    <property type="match status" value="1"/>
</dbReference>
<dbReference type="SMART" id="SM01383">
    <property type="entry name" value="Ribosomal_L2"/>
    <property type="match status" value="1"/>
</dbReference>
<dbReference type="SMART" id="SM01382">
    <property type="entry name" value="Ribosomal_L2_C"/>
    <property type="match status" value="1"/>
</dbReference>
<dbReference type="SUPFAM" id="SSF50249">
    <property type="entry name" value="Nucleic acid-binding proteins"/>
    <property type="match status" value="1"/>
</dbReference>
<dbReference type="SUPFAM" id="SSF50104">
    <property type="entry name" value="Translation proteins SH3-like domain"/>
    <property type="match status" value="1"/>
</dbReference>
<dbReference type="PROSITE" id="PS00467">
    <property type="entry name" value="RIBOSOMAL_L2"/>
    <property type="match status" value="1"/>
</dbReference>
<sequence>MAIRKYKPTTPGRRGASVSDFAEITRSTPEKSLVRPLHGRGGRNAHGRITTRHKGGGHKRAYRMIDFRRNDKDGVNAKVAHIEYDPNRTARIALLHYLDGEKRYIIAPNGLSQGDVVESGANADIKPGNNLPLRNIPAGTLIHAVELRPGGGAKLARSAGSSIQLLGKEASYASLRMPSGEIRRVDVRCRATVGEVGNAEQANINWGKAGRMRWKGKRPSVRGVVMNPVDHPHGGGEGKTSGGRHPVSPWGKPEGRTRNANKSSNKFIVRRRRTGKKHSR</sequence>
<comment type="function">
    <text evidence="1">One of the primary rRNA binding proteins. Required for association of the 30S and 50S subunits to form the 70S ribosome, for tRNA binding and peptide bond formation. It has been suggested to have peptidyltransferase activity; this is somewhat controversial. Makes several contacts with the 16S rRNA in the 70S ribosome.</text>
</comment>
<comment type="subunit">
    <text evidence="1">Part of the 50S ribosomal subunit. Forms a bridge to the 30S subunit in the 70S ribosome.</text>
</comment>
<comment type="similarity">
    <text evidence="1">Belongs to the universal ribosomal protein uL2 family.</text>
</comment>
<accession>A5U090</accession>
<reference key="1">
    <citation type="journal article" date="2008" name="PLoS ONE">
        <title>Genetic basis of virulence attenuation revealed by comparative genomic analysis of Mycobacterium tuberculosis strain H37Ra versus H37Rv.</title>
        <authorList>
            <person name="Zheng H."/>
            <person name="Lu L."/>
            <person name="Wang B."/>
            <person name="Pu S."/>
            <person name="Zhang X."/>
            <person name="Zhu G."/>
            <person name="Shi W."/>
            <person name="Zhang L."/>
            <person name="Wang H."/>
            <person name="Wang S."/>
            <person name="Zhao G."/>
            <person name="Zhang Y."/>
        </authorList>
    </citation>
    <scope>NUCLEOTIDE SEQUENCE [LARGE SCALE GENOMIC DNA]</scope>
    <source>
        <strain>ATCC 25177 / H37Ra</strain>
    </source>
</reference>
<name>RL2_MYCTA</name>
<organism>
    <name type="scientific">Mycobacterium tuberculosis (strain ATCC 25177 / H37Ra)</name>
    <dbReference type="NCBI Taxonomy" id="419947"/>
    <lineage>
        <taxon>Bacteria</taxon>
        <taxon>Bacillati</taxon>
        <taxon>Actinomycetota</taxon>
        <taxon>Actinomycetes</taxon>
        <taxon>Mycobacteriales</taxon>
        <taxon>Mycobacteriaceae</taxon>
        <taxon>Mycobacterium</taxon>
        <taxon>Mycobacterium tuberculosis complex</taxon>
    </lineage>
</organism>